<comment type="similarity">
    <text evidence="1">Belongs to the UPF0210 family.</text>
</comment>
<organism>
    <name type="scientific">Methanococcus maripaludis (strain C6 / ATCC BAA-1332)</name>
    <dbReference type="NCBI Taxonomy" id="444158"/>
    <lineage>
        <taxon>Archaea</taxon>
        <taxon>Methanobacteriati</taxon>
        <taxon>Methanobacteriota</taxon>
        <taxon>Methanomada group</taxon>
        <taxon>Methanococci</taxon>
        <taxon>Methanococcales</taxon>
        <taxon>Methanococcaceae</taxon>
        <taxon>Methanococcus</taxon>
    </lineage>
</organism>
<feature type="chain" id="PRO_1000139231" description="UPF0210 protein MmarC6_1246">
    <location>
        <begin position="1"/>
        <end position="458"/>
    </location>
</feature>
<dbReference type="EMBL" id="CP000867">
    <property type="protein sequence ID" value="ABX02059.1"/>
    <property type="molecule type" value="Genomic_DNA"/>
</dbReference>
<dbReference type="SMR" id="A9A9N6"/>
<dbReference type="STRING" id="444158.MmarC6_1246"/>
<dbReference type="KEGG" id="mmx:MmarC6_1246"/>
<dbReference type="eggNOG" id="arCOG04321">
    <property type="taxonomic scope" value="Archaea"/>
</dbReference>
<dbReference type="HOGENOM" id="CLU_048704_0_0_2"/>
<dbReference type="OrthoDB" id="21376at2157"/>
<dbReference type="PhylomeDB" id="A9A9N6"/>
<dbReference type="CDD" id="cd08025">
    <property type="entry name" value="RNR_PFL_like_DUF711"/>
    <property type="match status" value="1"/>
</dbReference>
<dbReference type="Gene3D" id="3.20.70.20">
    <property type="match status" value="1"/>
</dbReference>
<dbReference type="HAMAP" id="MF_01221">
    <property type="entry name" value="UPF0210"/>
    <property type="match status" value="1"/>
</dbReference>
<dbReference type="InterPro" id="IPR007841">
    <property type="entry name" value="UPF0210"/>
</dbReference>
<dbReference type="NCBIfam" id="NF003700">
    <property type="entry name" value="PRK05313.1"/>
    <property type="match status" value="1"/>
</dbReference>
<dbReference type="PANTHER" id="PTHR37560:SF1">
    <property type="entry name" value="UPF0210 PROTEIN MJ1665"/>
    <property type="match status" value="1"/>
</dbReference>
<dbReference type="PANTHER" id="PTHR37560">
    <property type="entry name" value="UPF0210 PROTEIN SPR0218"/>
    <property type="match status" value="1"/>
</dbReference>
<dbReference type="Pfam" id="PF05167">
    <property type="entry name" value="DUF711"/>
    <property type="match status" value="1"/>
</dbReference>
<dbReference type="SUPFAM" id="SSF51998">
    <property type="entry name" value="PFL-like glycyl radical enzymes"/>
    <property type="match status" value="1"/>
</dbReference>
<proteinExistence type="inferred from homology"/>
<gene>
    <name type="ordered locus">MmarC6_1246</name>
</gene>
<protein>
    <recommendedName>
        <fullName evidence="1">UPF0210 protein MmarC6_1246</fullName>
    </recommendedName>
</protein>
<name>Y1246_METM6</name>
<reference key="1">
    <citation type="submission" date="2007-10" db="EMBL/GenBank/DDBJ databases">
        <title>Complete sequence of Methanococcus maripaludis C6.</title>
        <authorList>
            <consortium name="US DOE Joint Genome Institute"/>
            <person name="Copeland A."/>
            <person name="Lucas S."/>
            <person name="Lapidus A."/>
            <person name="Barry K."/>
            <person name="Glavina del Rio T."/>
            <person name="Dalin E."/>
            <person name="Tice H."/>
            <person name="Pitluck S."/>
            <person name="Clum A."/>
            <person name="Schmutz J."/>
            <person name="Larimer F."/>
            <person name="Land M."/>
            <person name="Hauser L."/>
            <person name="Kyrpides N."/>
            <person name="Mikhailova N."/>
            <person name="Sieprawska-Lupa M."/>
            <person name="Whitman W.B."/>
            <person name="Richardson P."/>
        </authorList>
    </citation>
    <scope>NUCLEOTIDE SEQUENCE [LARGE SCALE GENOMIC DNA]</scope>
    <source>
        <strain>C6 / ATCC BAA-1332</strain>
    </source>
</reference>
<sequence>MYVPEEIIETIKMIEYQNLDIRTTTLGVNLKDCADKDLDLLKENIYNKITSYGGNLVETANKVSQKYGIPIVNKRISVTPIGLIMGSTLKGLSDEEAIDACVEVGITLDNIAKEVGVDFIGGYSALVQKRATPEEKMLIRSIPKLMTKTDRVCASVNVATTKAGINMYAVKKMGEIVKETSEITKDAIGCAKIVVFCNAPEDNPFMAGAFHGPGEGDAVINAGVSGPGVVRAVVEQLKGKDIGTVSDEIKKTAFKITRMGELVGKEVASELGVDFGIVDLSLAPTPAIGDSIANILEAVGLERCGTHGTTAALAMLNDAVKKGGAMASSNVGGLSGAFIPVSEDAGMIEAVEVGALRLEKLEAMTCVCSVGLDMIAVPGKTPASTLSAIIADEMAIGMINKKTTAVRIIPVPGKDVGDSVEYGGLLGTAPIMPVSEFSSEEFIERGGRIPAPIQSLTN</sequence>
<evidence type="ECO:0000255" key="1">
    <source>
        <dbReference type="HAMAP-Rule" id="MF_01221"/>
    </source>
</evidence>
<accession>A9A9N6</accession>